<evidence type="ECO:0000250" key="1"/>
<evidence type="ECO:0000255" key="2">
    <source>
        <dbReference type="PROSITE-ProRule" id="PRU00416"/>
    </source>
</evidence>
<evidence type="ECO:0000255" key="3">
    <source>
        <dbReference type="PROSITE-ProRule" id="PRU00421"/>
    </source>
</evidence>
<evidence type="ECO:0000255" key="4">
    <source>
        <dbReference type="PROSITE-ProRule" id="PRU00426"/>
    </source>
</evidence>
<comment type="function">
    <text evidence="1">The phosphoenolpyruvate-dependent sugar phosphotransferase system (sugar PTS), a major carbohydrate active -transport system, catalyzes the phosphorylation of incoming sugar substrates concomitantly with their translocation across the cell membrane. This system is involved in alpha- and beta-glucoside transport (By similarity).</text>
</comment>
<comment type="subcellular location">
    <subcellularLocation>
        <location evidence="4">Cell membrane</location>
        <topology evidence="4">Multi-pass membrane protein</topology>
    </subcellularLocation>
</comment>
<comment type="domain">
    <text>The EIIC domain forms the PTS system translocation channel and contains the specific substrate-binding site.</text>
</comment>
<comment type="domain">
    <text>The EIIB domain is phosphorylated by phospho-EIIA on a cysteinyl or histidyl residue, depending on the transported sugar. Then, it transfers the phosphoryl group to the sugar substrate concomitantly with the sugar uptake processed by the EIIC domain.</text>
</comment>
<comment type="domain">
    <text>The EIIA domain is phosphorylated by phospho-HPr on a histidyl residue. Then, it transfers the phosphoryl group to the EIIB domain.</text>
</comment>
<keyword id="KW-1003">Cell membrane</keyword>
<keyword id="KW-0418">Kinase</keyword>
<keyword id="KW-0472">Membrane</keyword>
<keyword id="KW-0598">Phosphotransferase system</keyword>
<keyword id="KW-0762">Sugar transport</keyword>
<keyword id="KW-0808">Transferase</keyword>
<keyword id="KW-0812">Transmembrane</keyword>
<keyword id="KW-1133">Transmembrane helix</keyword>
<keyword id="KW-0813">Transport</keyword>
<feature type="chain" id="PRO_0000351410" description="PTS system glucoside-specific EIICBA component">
    <location>
        <begin position="1"/>
        <end position="688"/>
    </location>
</feature>
<feature type="transmembrane region" description="Helical" evidence="4">
    <location>
        <begin position="12"/>
        <end position="32"/>
    </location>
</feature>
<feature type="transmembrane region" description="Helical" evidence="4">
    <location>
        <begin position="81"/>
        <end position="101"/>
    </location>
</feature>
<feature type="transmembrane region" description="Helical" evidence="4">
    <location>
        <begin position="137"/>
        <end position="157"/>
    </location>
</feature>
<feature type="transmembrane region" description="Helical" evidence="4">
    <location>
        <begin position="182"/>
        <end position="202"/>
    </location>
</feature>
<feature type="transmembrane region" description="Helical" evidence="4">
    <location>
        <begin position="223"/>
        <end position="243"/>
    </location>
</feature>
<feature type="transmembrane region" description="Helical" evidence="4">
    <location>
        <begin position="284"/>
        <end position="304"/>
    </location>
</feature>
<feature type="transmembrane region" description="Helical" evidence="4">
    <location>
        <begin position="315"/>
        <end position="335"/>
    </location>
</feature>
<feature type="transmembrane region" description="Helical" evidence="4">
    <location>
        <begin position="340"/>
        <end position="360"/>
    </location>
</feature>
<feature type="transmembrane region" description="Helical" evidence="4">
    <location>
        <begin position="364"/>
        <end position="384"/>
    </location>
</feature>
<feature type="transmembrane region" description="Helical" evidence="4">
    <location>
        <begin position="395"/>
        <end position="415"/>
    </location>
</feature>
<feature type="domain" description="PTS EIIC type-1" evidence="4">
    <location>
        <begin position="3"/>
        <end position="427"/>
    </location>
</feature>
<feature type="domain" description="PTS EIIB type-1" evidence="3">
    <location>
        <begin position="438"/>
        <end position="519"/>
    </location>
</feature>
<feature type="domain" description="PTS EIIA type-1" evidence="2">
    <location>
        <begin position="560"/>
        <end position="664"/>
    </location>
</feature>
<feature type="active site" description="Phosphocysteine intermediate; for EIIB activity" evidence="3">
    <location>
        <position position="460"/>
    </location>
</feature>
<feature type="active site" description="Tele-phosphohistidine intermediate; for EIIA activity" evidence="2">
    <location>
        <position position="612"/>
    </location>
</feature>
<proteinExistence type="inferred from homology"/>
<reference key="1">
    <citation type="journal article" date="2007" name="PLoS ONE">
        <title>Molecular correlates of host specialization in Staphylococcus aureus.</title>
        <authorList>
            <person name="Herron-Olson L."/>
            <person name="Fitzgerald J.R."/>
            <person name="Musser J.M."/>
            <person name="Kapur V."/>
        </authorList>
    </citation>
    <scope>NUCLEOTIDE SEQUENCE [LARGE SCALE GENOMIC DNA]</scope>
    <source>
        <strain>bovine RF122 / ET3-1</strain>
    </source>
</reference>
<dbReference type="EC" id="2.7.1.-"/>
<dbReference type="EMBL" id="AJ938182">
    <property type="protein sequence ID" value="CAI82100.1"/>
    <property type="molecule type" value="Genomic_DNA"/>
</dbReference>
<dbReference type="RefSeq" id="WP_000473697.1">
    <property type="nucleotide sequence ID" value="NC_007622.1"/>
</dbReference>
<dbReference type="SMR" id="Q2YWC1"/>
<dbReference type="KEGG" id="sab:SAB2412c"/>
<dbReference type="HOGENOM" id="CLU_012312_1_1_9"/>
<dbReference type="GO" id="GO:0005886">
    <property type="term" value="C:plasma membrane"/>
    <property type="evidence" value="ECO:0007669"/>
    <property type="project" value="UniProtKB-SubCell"/>
</dbReference>
<dbReference type="GO" id="GO:0055056">
    <property type="term" value="F:D-glucose transmembrane transporter activity"/>
    <property type="evidence" value="ECO:0007669"/>
    <property type="project" value="InterPro"/>
</dbReference>
<dbReference type="GO" id="GO:0016301">
    <property type="term" value="F:kinase activity"/>
    <property type="evidence" value="ECO:0007669"/>
    <property type="project" value="UniProtKB-KW"/>
</dbReference>
<dbReference type="GO" id="GO:0008982">
    <property type="term" value="F:protein-N(PI)-phosphohistidine-sugar phosphotransferase activity"/>
    <property type="evidence" value="ECO:0007669"/>
    <property type="project" value="InterPro"/>
</dbReference>
<dbReference type="GO" id="GO:0090563">
    <property type="term" value="F:protein-phosphocysteine-sugar phosphotransferase activity"/>
    <property type="evidence" value="ECO:0007669"/>
    <property type="project" value="TreeGrafter"/>
</dbReference>
<dbReference type="GO" id="GO:1904659">
    <property type="term" value="P:D-glucose transmembrane transport"/>
    <property type="evidence" value="ECO:0007669"/>
    <property type="project" value="InterPro"/>
</dbReference>
<dbReference type="GO" id="GO:0009401">
    <property type="term" value="P:phosphoenolpyruvate-dependent sugar phosphotransferase system"/>
    <property type="evidence" value="ECO:0007669"/>
    <property type="project" value="UniProtKB-KW"/>
</dbReference>
<dbReference type="CDD" id="cd00212">
    <property type="entry name" value="PTS_IIB_glc"/>
    <property type="match status" value="1"/>
</dbReference>
<dbReference type="FunFam" id="2.70.70.10:FF:000001">
    <property type="entry name" value="PTS system glucose-specific IIA component"/>
    <property type="match status" value="1"/>
</dbReference>
<dbReference type="FunFam" id="3.30.1360.60:FF:000001">
    <property type="entry name" value="PTS system glucose-specific IIBC component PtsG"/>
    <property type="match status" value="1"/>
</dbReference>
<dbReference type="Gene3D" id="2.70.70.10">
    <property type="entry name" value="Glucose Permease (Domain IIA)"/>
    <property type="match status" value="1"/>
</dbReference>
<dbReference type="Gene3D" id="3.30.1360.60">
    <property type="entry name" value="Glucose permease domain IIB"/>
    <property type="match status" value="1"/>
</dbReference>
<dbReference type="InterPro" id="IPR011055">
    <property type="entry name" value="Dup_hybrid_motif"/>
</dbReference>
<dbReference type="InterPro" id="IPR036878">
    <property type="entry name" value="Glu_permease_IIB"/>
</dbReference>
<dbReference type="InterPro" id="IPR018113">
    <property type="entry name" value="PTrfase_EIIB_Cys"/>
</dbReference>
<dbReference type="InterPro" id="IPR001127">
    <property type="entry name" value="PTS_EIIA_1_perm"/>
</dbReference>
<dbReference type="InterPro" id="IPR003352">
    <property type="entry name" value="PTS_EIIC"/>
</dbReference>
<dbReference type="InterPro" id="IPR013013">
    <property type="entry name" value="PTS_EIIC_1"/>
</dbReference>
<dbReference type="InterPro" id="IPR050429">
    <property type="entry name" value="PTS_Glucose_EIICBA"/>
</dbReference>
<dbReference type="InterPro" id="IPR001996">
    <property type="entry name" value="PTS_IIB_1"/>
</dbReference>
<dbReference type="InterPro" id="IPR011299">
    <property type="entry name" value="PTS_IIBC_glc"/>
</dbReference>
<dbReference type="NCBIfam" id="TIGR00826">
    <property type="entry name" value="EIIB_glc"/>
    <property type="match status" value="1"/>
</dbReference>
<dbReference type="NCBIfam" id="TIGR00830">
    <property type="entry name" value="PTBA"/>
    <property type="match status" value="1"/>
</dbReference>
<dbReference type="NCBIfam" id="TIGR02002">
    <property type="entry name" value="PTS-II-BC-glcB"/>
    <property type="match status" value="1"/>
</dbReference>
<dbReference type="PANTHER" id="PTHR30009">
    <property type="entry name" value="CYTOCHROME C-TYPE SYNTHESIS PROTEIN AND PTS TRANSMEMBRANE COMPONENT"/>
    <property type="match status" value="1"/>
</dbReference>
<dbReference type="PANTHER" id="PTHR30009:SF20">
    <property type="entry name" value="PTS SYSTEM GLUCOSE-SPECIFIC EIICB COMPONENT-RELATED"/>
    <property type="match status" value="1"/>
</dbReference>
<dbReference type="Pfam" id="PF00358">
    <property type="entry name" value="PTS_EIIA_1"/>
    <property type="match status" value="1"/>
</dbReference>
<dbReference type="Pfam" id="PF00367">
    <property type="entry name" value="PTS_EIIB"/>
    <property type="match status" value="1"/>
</dbReference>
<dbReference type="Pfam" id="PF02378">
    <property type="entry name" value="PTS_EIIC"/>
    <property type="match status" value="1"/>
</dbReference>
<dbReference type="SUPFAM" id="SSF51261">
    <property type="entry name" value="Duplicated hybrid motif"/>
    <property type="match status" value="1"/>
</dbReference>
<dbReference type="SUPFAM" id="SSF55604">
    <property type="entry name" value="Glucose permease domain IIB"/>
    <property type="match status" value="1"/>
</dbReference>
<dbReference type="PROSITE" id="PS51093">
    <property type="entry name" value="PTS_EIIA_TYPE_1"/>
    <property type="match status" value="1"/>
</dbReference>
<dbReference type="PROSITE" id="PS00371">
    <property type="entry name" value="PTS_EIIA_TYPE_1_HIS"/>
    <property type="match status" value="1"/>
</dbReference>
<dbReference type="PROSITE" id="PS51098">
    <property type="entry name" value="PTS_EIIB_TYPE_1"/>
    <property type="match status" value="1"/>
</dbReference>
<dbReference type="PROSITE" id="PS01035">
    <property type="entry name" value="PTS_EIIB_TYPE_1_CYS"/>
    <property type="match status" value="1"/>
</dbReference>
<dbReference type="PROSITE" id="PS51103">
    <property type="entry name" value="PTS_EIIC_TYPE_1"/>
    <property type="match status" value="1"/>
</dbReference>
<protein>
    <recommendedName>
        <fullName>PTS system glucoside-specific EIICBA component</fullName>
    </recommendedName>
    <domain>
        <recommendedName>
            <fullName>Glucoside permease IIC component</fullName>
        </recommendedName>
        <alternativeName>
            <fullName>PTS system glucoside-specific EIIC component</fullName>
        </alternativeName>
    </domain>
    <domain>
        <recommendedName>
            <fullName>Glucoside-specific phosphotransferase enzyme IIB component</fullName>
            <ecNumber>2.7.1.-</ecNumber>
        </recommendedName>
        <alternativeName>
            <fullName>PTS system glucoside-specific EIIB component</fullName>
        </alternativeName>
    </domain>
    <domain>
        <recommendedName>
            <fullName>Glucoside-specific phosphotransferase enzyme IIA component</fullName>
        </recommendedName>
        <alternativeName>
            <fullName>PTS system glucoside-specific EIIA component</fullName>
        </alternativeName>
    </domain>
</protein>
<accession>Q2YWC1</accession>
<name>PTU3C_STAAB</name>
<organism>
    <name type="scientific">Staphylococcus aureus (strain bovine RF122 / ET3-1)</name>
    <dbReference type="NCBI Taxonomy" id="273036"/>
    <lineage>
        <taxon>Bacteria</taxon>
        <taxon>Bacillati</taxon>
        <taxon>Bacillota</taxon>
        <taxon>Bacilli</taxon>
        <taxon>Bacillales</taxon>
        <taxon>Staphylococcaceae</taxon>
        <taxon>Staphylococcus</taxon>
    </lineage>
</organism>
<gene>
    <name type="primary">glcB</name>
    <name type="ordered locus">SAB2412c</name>
</gene>
<sequence length="688" mass="74360">MFKKLFGQLQRIGKALMLPVAILPAAGILLAFGNAMHNEQLVEIAPWLKNDIIVMISSVMEASGQVVFDNLPLLFAVGTALGLAGGDGVAALAALVGYLIMNATMGKVLHITIDDIFSYAKGAKELSQAAKEPAHALVLGIPTLQTGVFGGIIMGALAAWCYNKFYNITLPPFLGFFAGKRFVPIVTSVVAIATGVVLSFAWPPIQDGLNSLSNFLLNKNLTLTTFIFGIIERSLIPFGLHHIFYSPFWFEFGSYTNHAGELVRGDQRIWMAQLRDGVPFTAGAFTTGKYPFMMFGLPAAAFAIYKNARPERKKVVGGLMLSAGLTAFLTGITEPLEFSFLFVAPVLYGIHVLLAGTSFLVMHLLGVKIGMTFSGGFIDYILYGLLNWDRSHALLVIPVGIVYAIVYYFLFDFAIRKFKLKTPGREDEETEIRNSSVAKLPFDVLDAMGGKENIKHLDACITRLRVEVVDKSKVDVAGIKALGASGVLEVGNNMQAIFGPKSDQIKHDMAKIMSGEITKPSETTVTEEMSDEPVHVEALGTTDIYAPGVGQIIPLSEVPDQVFAGKMMGDGVGFIPEKGEIVAPFDGTVKTIFPTKHAIGLESGSGVEVLIHIGIDTVKLNGEGFESLINVDEKVTQGQPLMKVNLAYLKAHAPSIVTPMIITNLENKELVIEDVQDADPGKLIMTVK</sequence>